<protein>
    <recommendedName>
        <fullName evidence="1">Packaging protein 3</fullName>
    </recommendedName>
    <alternativeName>
        <fullName evidence="1">L1-52/55 kDa protein</fullName>
    </alternativeName>
    <alternativeName>
        <fullName evidence="1">Packaging protein 52K</fullName>
    </alternativeName>
</protein>
<comment type="function">
    <text evidence="1">Involved in viral genome packaging through its interaction with packaging proteins 1 and 2. After proteolytic cleavage by adenovirus protease, L1 52/55k protein is removed from the capsid during viral maturation.</text>
</comment>
<comment type="subunit">
    <text evidence="1">Part of the genome packaging complex composed of packaging proteins 1, 2 and 3; this complex specifically binds to the packaging sequence on the left end of viral genomic DNA and performs packaging of the viral genome. Interacts with hexon-linking protein IIIa; this interaction is required to promote correct genome packaging.</text>
</comment>
<comment type="subcellular location">
    <subcellularLocation>
        <location evidence="1">Host nucleus</location>
    </subcellularLocation>
    <text evidence="1">Nuclear protein present in empty capsids and assembly intermediates.</text>
</comment>
<comment type="induction">
    <text evidence="1">Expressed in the early phase and late phase of the viral replicative cycle.</text>
</comment>
<comment type="PTM">
    <text evidence="1">Cleaved at different sites by the viral protease during virion maturation.</text>
</comment>
<comment type="miscellaneous">
    <text evidence="1">All late proteins expressed from the major late promoter are produced by alternative splicing and alternative polyadenylation of the same gene giving rise to non-overlapping ORFs. A leader sequence is present in the N-terminus of all these mRNAs and is recognized by the viral shutoff protein to provide expression although conventional translation via ribosome scanning from the cap has been shut off in the host cell.</text>
</comment>
<comment type="similarity">
    <text evidence="1">Belongs to the adenoviridae packaging protein 3 family.</text>
</comment>
<organismHost>
    <name type="scientific">Homo sapiens</name>
    <name type="common">Human</name>
    <dbReference type="NCBI Taxonomy" id="9606"/>
</organismHost>
<sequence>MHPVLRQMRPQPRATTASAAVALSGSGEQEEPQCPTLELEEGEGIARLGAHSPERHPRVQLARDSRVAFVPRQNMFRDNSGEEAEEMRDCRFRAGRELRRGFNRERLLREEDFEPDEHSGISSARAHVSAANLVTAYEQTVTEERNFQKSFNNHVRTLIAREEVAIGLMHLWDFVEAYVHNPASKPLTAQLFLIVQHSRDNETFRDAMLNIAEPQGRWLLDLINILQSIVVQERSLSLADKVAAINYSMLSLGKFYARKIYKSPYVPIDKEVKIDSFYMRMALKVLTLSDDLGVYRNDRIHKAVSASRRRELSDKELMHSLQRALTGAGTEDESFFDMGADLRWQPSARALEAAGVASADVTGDDDDEDQYED</sequence>
<organism>
    <name type="scientific">Human adenovirus A serotype 12</name>
    <name type="common">HAdV-12</name>
    <name type="synonym">Human adenovirus 12</name>
    <dbReference type="NCBI Taxonomy" id="28282"/>
    <lineage>
        <taxon>Viruses</taxon>
        <taxon>Varidnaviria</taxon>
        <taxon>Bamfordvirae</taxon>
        <taxon>Preplasmiviricota</taxon>
        <taxon>Tectiliviricetes</taxon>
        <taxon>Rowavirales</taxon>
        <taxon>Adenoviridae</taxon>
        <taxon>Mastadenovirus</taxon>
        <taxon>Human mastadenovirus A</taxon>
    </lineage>
</organism>
<evidence type="ECO:0000255" key="1">
    <source>
        <dbReference type="HAMAP-Rule" id="MF_04058"/>
    </source>
</evidence>
<evidence type="ECO:0000256" key="2">
    <source>
        <dbReference type="SAM" id="MobiDB-lite"/>
    </source>
</evidence>
<dbReference type="EMBL" id="X73487">
    <property type="protein sequence ID" value="CAA51885.1"/>
    <property type="molecule type" value="Genomic_DNA"/>
</dbReference>
<dbReference type="PIR" id="S33936">
    <property type="entry name" value="S33936"/>
</dbReference>
<dbReference type="RefSeq" id="NP_040918.1">
    <property type="nucleotide sequence ID" value="NC_001460.1"/>
</dbReference>
<dbReference type="SMR" id="P36715"/>
<dbReference type="GeneID" id="1460848"/>
<dbReference type="Proteomes" id="UP000004993">
    <property type="component" value="Genome"/>
</dbReference>
<dbReference type="GO" id="GO:0042025">
    <property type="term" value="C:host cell nucleus"/>
    <property type="evidence" value="ECO:0007669"/>
    <property type="project" value="UniProtKB-SubCell"/>
</dbReference>
<dbReference type="GO" id="GO:0019073">
    <property type="term" value="P:viral DNA genome packaging"/>
    <property type="evidence" value="ECO:0007669"/>
    <property type="project" value="UniProtKB-UniRule"/>
</dbReference>
<dbReference type="GO" id="GO:0019076">
    <property type="term" value="P:viral release from host cell"/>
    <property type="evidence" value="ECO:0007669"/>
    <property type="project" value="UniProtKB-UniRule"/>
</dbReference>
<dbReference type="HAMAP" id="MF_04058">
    <property type="entry name" value="ADV_PKG3"/>
    <property type="match status" value="1"/>
</dbReference>
<dbReference type="InterPro" id="IPR037536">
    <property type="entry name" value="ADV_PKG3"/>
</dbReference>
<dbReference type="InterPro" id="IPR004292">
    <property type="entry name" value="L1-like"/>
</dbReference>
<dbReference type="Pfam" id="PF03052">
    <property type="entry name" value="Adeno_52K"/>
    <property type="match status" value="1"/>
</dbReference>
<feature type="chain" id="PRO_0000221868" description="Packaging protein 3">
    <location>
        <begin position="1"/>
        <end position="373"/>
    </location>
</feature>
<feature type="region of interest" description="Interaction with packaging protein 1" evidence="1">
    <location>
        <begin position="1"/>
        <end position="150"/>
    </location>
</feature>
<feature type="region of interest" description="Disordered" evidence="2">
    <location>
        <begin position="1"/>
        <end position="32"/>
    </location>
</feature>
<feature type="modified residue" description="Phosphoserine; by host" evidence="1">
    <location>
        <position position="52"/>
    </location>
</feature>
<feature type="modified residue" description="Phosphoserine; by host" evidence="1">
    <location>
        <position position="334"/>
    </location>
</feature>
<keyword id="KW-1048">Host nucleus</keyword>
<keyword id="KW-0426">Late protein</keyword>
<keyword id="KW-0597">Phosphoprotein</keyword>
<keyword id="KW-1185">Reference proteome</keyword>
<keyword id="KW-0231">Viral genome packaging</keyword>
<keyword id="KW-1188">Viral release from host cell</keyword>
<reference key="1">
    <citation type="journal article" date="1994" name="J. Virol.">
        <title>Nucleotide sequence of human adenovirus type 12 DNA: comparative functional analysis.</title>
        <authorList>
            <person name="Sprengel J."/>
            <person name="Schmitz B."/>
            <person name="Heuss-Neitzel D."/>
            <person name="Zock C."/>
            <person name="Doerfler W."/>
        </authorList>
    </citation>
    <scope>NUCLEOTIDE SEQUENCE [LARGE SCALE GENOMIC DNA]</scope>
</reference>
<gene>
    <name evidence="1" type="primary">L1</name>
</gene>
<proteinExistence type="inferred from homology"/>
<accession>P36715</accession>
<name>PKG3_ADE12</name>